<reference key="1">
    <citation type="journal article" date="2007" name="Appl. Environ. Microbiol.">
        <title>Comparison of ergot alkaloid biosynthesis gene clusters in Claviceps species indicates loss of late pathway steps in evolution of C. fusiformis.</title>
        <authorList>
            <person name="Lorenz N."/>
            <person name="Wilson E.V."/>
            <person name="Machado C."/>
            <person name="Schardl C.L."/>
            <person name="Tudzynski P."/>
        </authorList>
    </citation>
    <scope>NUCLEOTIDE SEQUENCE [GENOMIC DNA]</scope>
    <source>
        <strain>ATCC 26245 / DSM 2942 / CBS 164.59</strain>
    </source>
</reference>
<evidence type="ECO:0000250" key="1">
    <source>
        <dbReference type="UniProtKB" id="P0CT21"/>
    </source>
</evidence>
<evidence type="ECO:0000269" key="2">
    <source>
    </source>
</evidence>
<evidence type="ECO:0000303" key="3">
    <source>
    </source>
</evidence>
<evidence type="ECO:0000305" key="4"/>
<evidence type="ECO:0000305" key="5">
    <source>
    </source>
</evidence>
<proteinExistence type="inferred from homology"/>
<protein>
    <recommendedName>
        <fullName evidence="1">Agroclavine dehydrogenase</fullName>
        <ecNumber evidence="1">1.5.1.46</ecNumber>
    </recommendedName>
    <alternativeName>
        <fullName evidence="3">Ergot alkaloid biosynthesis protein G</fullName>
    </alternativeName>
</protein>
<gene>
    <name evidence="3" type="primary">easG</name>
</gene>
<sequence length="289" mass="31815">MTILLTGGSGKTAGHIANLLKEAKLPFIVGSRSSNPHTVERHRTFDWLDEATFNNVLSVDEGMEPVSVVWLVSPPILDLAPPVIRFIDFASSRGVKRFVLLSASTVEKGGPAMGLIHAHLDTIEGVSYTVLRPSWFMENFSTRGEFPCDTIREEDTIYSAAKDGKIPFISVADIARVALRALTAPALHNKDHVLLGPELLTYDDVAEILTRVVGRNIHHVRLTESELAAKLQERGMPADEAAMHASLDSIVEAGAEEKLNTEVKDLTGEEPRHFADFVSDNKNVWLMRD</sequence>
<feature type="chain" id="PRO_0000439143" description="Agroclavine dehydrogenase">
    <location>
        <begin position="1"/>
        <end position="289"/>
    </location>
</feature>
<accession>A8C7S1</accession>
<name>EASG_CLAFS</name>
<comment type="function">
    <text evidence="1 2">Agroclavine dehydrogenase; part of the gene cluster that mediates the biosynthesis of fungal ergot alkaloid ergovaline, the predominant ergopeptine product in E.festucae var. lolii (PubMed:17720822). DmaW catalyzes the first step of ergot alkaloid biosynthesis by condensing dimethylallyl diphosphate (DMAP) and tryptophan to form 4-dimethylallyl-L-tryptophan (By similarity). The second step is catalyzed by the methyltransferase easF that methylates 4-dimethylallyl-L-tryptophan in the presence of S-adenosyl-L-methionine, resulting in the formation of 4-dimethylallyl-L-abrine (By similarity). The catalase easC and the FAD-dependent oxidoreductase easE then transform 4-dimethylallyl-L-abrine to chanoclavine-I which is further oxidized by easD in the presence of NAD(+), resulting in the formation of chanoclavine-I aldehyde (By similarity). Agroclavine dehydrogenase easG then mediates the conversion of chanoclavine-I aldehyde to agroclavine via a non-enzymatic adduct reaction: the substrate is an iminium intermediate that is formed spontaneously from chanoclavine-I aldehyde in the presence of glutathione (By similarity). Further conversion of agroclavine to paspalic acid is a two-step process involving oxidation of agroclavine to elymoclavine and of elymoclavine to paspalic acid, the second step being performed by the elymoclavine oxidase cloA (PubMed:17720822). However, cloA does not encode a functional enzyme indicating that C.fusiformis terminates its ergot alkaloid pathway at elymoclavine (PubMed:17720822).</text>
</comment>
<comment type="catalytic activity">
    <reaction evidence="1">
        <text>agroclavine + NADP(+) = didehydroagroclavine + NADPH + H(+)</text>
        <dbReference type="Rhea" id="RHEA:34059"/>
        <dbReference type="ChEBI" id="CHEBI:15378"/>
        <dbReference type="ChEBI" id="CHEBI:57783"/>
        <dbReference type="ChEBI" id="CHEBI:58349"/>
        <dbReference type="ChEBI" id="CHEBI:65036"/>
        <dbReference type="ChEBI" id="CHEBI:65042"/>
        <dbReference type="EC" id="1.5.1.46"/>
    </reaction>
</comment>
<comment type="pathway">
    <text evidence="5">Alkaloid biosynthesis; ergot alkaloid biosynthesis.</text>
</comment>
<comment type="subunit">
    <text evidence="1">Monomer.</text>
</comment>
<comment type="similarity">
    <text evidence="4">Belongs to the fgaFS/easG family.</text>
</comment>
<dbReference type="EC" id="1.5.1.46" evidence="1"/>
<dbReference type="EMBL" id="EU006773">
    <property type="protein sequence ID" value="ABV57825.1"/>
    <property type="molecule type" value="Genomic_DNA"/>
</dbReference>
<dbReference type="SMR" id="A8C7S1"/>
<dbReference type="UniPathway" id="UPA00327"/>
<dbReference type="GO" id="GO:0016491">
    <property type="term" value="F:oxidoreductase activity"/>
    <property type="evidence" value="ECO:0007669"/>
    <property type="project" value="UniProtKB-KW"/>
</dbReference>
<dbReference type="GO" id="GO:0035835">
    <property type="term" value="P:indole alkaloid biosynthetic process"/>
    <property type="evidence" value="ECO:0007669"/>
    <property type="project" value="UniProtKB-UniPathway"/>
</dbReference>
<dbReference type="Gene3D" id="3.40.50.720">
    <property type="entry name" value="NAD(P)-binding Rossmann-like Domain"/>
    <property type="match status" value="1"/>
</dbReference>
<dbReference type="Gene3D" id="3.90.25.10">
    <property type="entry name" value="UDP-galactose 4-epimerase, domain 1"/>
    <property type="match status" value="1"/>
</dbReference>
<dbReference type="InterPro" id="IPR051604">
    <property type="entry name" value="Ergot_Alk_Oxidoreductase"/>
</dbReference>
<dbReference type="InterPro" id="IPR019901">
    <property type="entry name" value="Ergot_alkaloid_biosynthesis"/>
</dbReference>
<dbReference type="InterPro" id="IPR036291">
    <property type="entry name" value="NAD(P)-bd_dom_sf"/>
</dbReference>
<dbReference type="InterPro" id="IPR008030">
    <property type="entry name" value="NmrA-like"/>
</dbReference>
<dbReference type="NCBIfam" id="TIGR03649">
    <property type="entry name" value="ergot_EASG"/>
    <property type="match status" value="1"/>
</dbReference>
<dbReference type="PANTHER" id="PTHR43162">
    <property type="match status" value="1"/>
</dbReference>
<dbReference type="PANTHER" id="PTHR43162:SF1">
    <property type="entry name" value="PRESTALK A DIFFERENTIATION PROTEIN A"/>
    <property type="match status" value="1"/>
</dbReference>
<dbReference type="Pfam" id="PF05368">
    <property type="entry name" value="NmrA"/>
    <property type="match status" value="1"/>
</dbReference>
<dbReference type="SUPFAM" id="SSF51735">
    <property type="entry name" value="NAD(P)-binding Rossmann-fold domains"/>
    <property type="match status" value="1"/>
</dbReference>
<organism>
    <name type="scientific">Claviceps fusiformis</name>
    <name type="common">Ergot fungus</name>
    <dbReference type="NCBI Taxonomy" id="40602"/>
    <lineage>
        <taxon>Eukaryota</taxon>
        <taxon>Fungi</taxon>
        <taxon>Dikarya</taxon>
        <taxon>Ascomycota</taxon>
        <taxon>Pezizomycotina</taxon>
        <taxon>Sordariomycetes</taxon>
        <taxon>Hypocreomycetidae</taxon>
        <taxon>Hypocreales</taxon>
        <taxon>Clavicipitaceae</taxon>
        <taxon>Claviceps</taxon>
    </lineage>
</organism>
<keyword id="KW-0017">Alkaloid metabolism</keyword>
<keyword id="KW-0521">NADP</keyword>
<keyword id="KW-0560">Oxidoreductase</keyword>